<sequence length="163" mass="17639">MRAVIQKTVGAKVDVVSEAGTETCGKIDGGFVVLLGVTHSDTEKDARYIADKIAHLRVFEDEAGKLNLSLKDVGGAVLLVSQFTLYADAASGRRPSFSQAAPAEQAQQLYLRTAELLRGHGIHVETGRFRTHMQVSLCNDGPVTILLDSFMTRISPKMKVVPD</sequence>
<gene>
    <name evidence="1" type="primary">dtd</name>
    <name type="ordered locus">NMB0347</name>
</gene>
<evidence type="ECO:0000255" key="1">
    <source>
        <dbReference type="HAMAP-Rule" id="MF_00518"/>
    </source>
</evidence>
<proteinExistence type="inferred from homology"/>
<keyword id="KW-0963">Cytoplasm</keyword>
<keyword id="KW-0378">Hydrolase</keyword>
<keyword id="KW-1185">Reference proteome</keyword>
<keyword id="KW-0694">RNA-binding</keyword>
<keyword id="KW-0820">tRNA-binding</keyword>
<accession>Q9K143</accession>
<reference key="1">
    <citation type="journal article" date="2000" name="Science">
        <title>Complete genome sequence of Neisseria meningitidis serogroup B strain MC58.</title>
        <authorList>
            <person name="Tettelin H."/>
            <person name="Saunders N.J."/>
            <person name="Heidelberg J.F."/>
            <person name="Jeffries A.C."/>
            <person name="Nelson K.E."/>
            <person name="Eisen J.A."/>
            <person name="Ketchum K.A."/>
            <person name="Hood D.W."/>
            <person name="Peden J.F."/>
            <person name="Dodson R.J."/>
            <person name="Nelson W.C."/>
            <person name="Gwinn M.L."/>
            <person name="DeBoy R.T."/>
            <person name="Peterson J.D."/>
            <person name="Hickey E.K."/>
            <person name="Haft D.H."/>
            <person name="Salzberg S.L."/>
            <person name="White O."/>
            <person name="Fleischmann R.D."/>
            <person name="Dougherty B.A."/>
            <person name="Mason T.M."/>
            <person name="Ciecko A."/>
            <person name="Parksey D.S."/>
            <person name="Blair E."/>
            <person name="Cittone H."/>
            <person name="Clark E.B."/>
            <person name="Cotton M.D."/>
            <person name="Utterback T.R."/>
            <person name="Khouri H.M."/>
            <person name="Qin H."/>
            <person name="Vamathevan J.J."/>
            <person name="Gill J."/>
            <person name="Scarlato V."/>
            <person name="Masignani V."/>
            <person name="Pizza M."/>
            <person name="Grandi G."/>
            <person name="Sun L."/>
            <person name="Smith H.O."/>
            <person name="Fraser C.M."/>
            <person name="Moxon E.R."/>
            <person name="Rappuoli R."/>
            <person name="Venter J.C."/>
        </authorList>
    </citation>
    <scope>NUCLEOTIDE SEQUENCE [LARGE SCALE GENOMIC DNA]</scope>
    <source>
        <strain>ATCC BAA-335 / MC58</strain>
    </source>
</reference>
<name>DTD_NEIMB</name>
<organism>
    <name type="scientific">Neisseria meningitidis serogroup B (strain ATCC BAA-335 / MC58)</name>
    <dbReference type="NCBI Taxonomy" id="122586"/>
    <lineage>
        <taxon>Bacteria</taxon>
        <taxon>Pseudomonadati</taxon>
        <taxon>Pseudomonadota</taxon>
        <taxon>Betaproteobacteria</taxon>
        <taxon>Neisseriales</taxon>
        <taxon>Neisseriaceae</taxon>
        <taxon>Neisseria</taxon>
    </lineage>
</organism>
<protein>
    <recommendedName>
        <fullName evidence="1">D-aminoacyl-tRNA deacylase</fullName>
        <shortName evidence="1">DTD</shortName>
        <ecNumber evidence="1">3.1.1.96</ecNumber>
    </recommendedName>
    <alternativeName>
        <fullName evidence="1">Gly-tRNA(Ala) deacylase</fullName>
    </alternativeName>
</protein>
<comment type="function">
    <text evidence="1">An aminoacyl-tRNA editing enzyme that deacylates mischarged D-aminoacyl-tRNAs. Also deacylates mischarged glycyl-tRNA(Ala), protecting cells against glycine mischarging by AlaRS. Acts via tRNA-based rather than protein-based catalysis; rejects L-amino acids rather than detecting D-amino acids in the active site. By recycling D-aminoacyl-tRNA to D-amino acids and free tRNA molecules, this enzyme counteracts the toxicity associated with the formation of D-aminoacyl-tRNA entities in vivo and helps enforce protein L-homochirality.</text>
</comment>
<comment type="catalytic activity">
    <reaction evidence="1">
        <text>glycyl-tRNA(Ala) + H2O = tRNA(Ala) + glycine + H(+)</text>
        <dbReference type="Rhea" id="RHEA:53744"/>
        <dbReference type="Rhea" id="RHEA-COMP:9657"/>
        <dbReference type="Rhea" id="RHEA-COMP:13640"/>
        <dbReference type="ChEBI" id="CHEBI:15377"/>
        <dbReference type="ChEBI" id="CHEBI:15378"/>
        <dbReference type="ChEBI" id="CHEBI:57305"/>
        <dbReference type="ChEBI" id="CHEBI:78442"/>
        <dbReference type="ChEBI" id="CHEBI:78522"/>
        <dbReference type="EC" id="3.1.1.96"/>
    </reaction>
</comment>
<comment type="catalytic activity">
    <reaction evidence="1">
        <text>a D-aminoacyl-tRNA + H2O = a tRNA + a D-alpha-amino acid + H(+)</text>
        <dbReference type="Rhea" id="RHEA:13953"/>
        <dbReference type="Rhea" id="RHEA-COMP:10123"/>
        <dbReference type="Rhea" id="RHEA-COMP:10124"/>
        <dbReference type="ChEBI" id="CHEBI:15377"/>
        <dbReference type="ChEBI" id="CHEBI:15378"/>
        <dbReference type="ChEBI" id="CHEBI:59871"/>
        <dbReference type="ChEBI" id="CHEBI:78442"/>
        <dbReference type="ChEBI" id="CHEBI:79333"/>
        <dbReference type="EC" id="3.1.1.96"/>
    </reaction>
</comment>
<comment type="subunit">
    <text evidence="1">Homodimer.</text>
</comment>
<comment type="subcellular location">
    <subcellularLocation>
        <location evidence="1">Cytoplasm</location>
    </subcellularLocation>
</comment>
<comment type="domain">
    <text evidence="1">A Gly-cisPro motif from one monomer fits into the active site of the other monomer to allow specific chiral rejection of L-amino acids.</text>
</comment>
<comment type="similarity">
    <text evidence="1">Belongs to the DTD family.</text>
</comment>
<feature type="chain" id="PRO_0000164565" description="D-aminoacyl-tRNA deacylase">
    <location>
        <begin position="1"/>
        <end position="163"/>
    </location>
</feature>
<feature type="short sequence motif" description="Gly-cisPro motif, important for rejection of L-amino acids" evidence="1">
    <location>
        <begin position="141"/>
        <end position="142"/>
    </location>
</feature>
<dbReference type="EC" id="3.1.1.96" evidence="1"/>
<dbReference type="EMBL" id="AE002098">
    <property type="protein sequence ID" value="AAF40790.1"/>
    <property type="molecule type" value="Genomic_DNA"/>
</dbReference>
<dbReference type="PIR" id="A81210">
    <property type="entry name" value="A81210"/>
</dbReference>
<dbReference type="RefSeq" id="NP_273396.1">
    <property type="nucleotide sequence ID" value="NC_003112.2"/>
</dbReference>
<dbReference type="RefSeq" id="WP_002224881.1">
    <property type="nucleotide sequence ID" value="NC_003112.2"/>
</dbReference>
<dbReference type="SMR" id="Q9K143"/>
<dbReference type="FunCoup" id="Q9K143">
    <property type="interactions" value="415"/>
</dbReference>
<dbReference type="STRING" id="122586.NMB0347"/>
<dbReference type="PaxDb" id="122586-NMB0347"/>
<dbReference type="KEGG" id="nme:NMB0347"/>
<dbReference type="PATRIC" id="fig|122586.8.peg.439"/>
<dbReference type="HOGENOM" id="CLU_076901_1_0_4"/>
<dbReference type="InParanoid" id="Q9K143"/>
<dbReference type="OrthoDB" id="9801395at2"/>
<dbReference type="Proteomes" id="UP000000425">
    <property type="component" value="Chromosome"/>
</dbReference>
<dbReference type="GO" id="GO:0005737">
    <property type="term" value="C:cytoplasm"/>
    <property type="evidence" value="ECO:0000318"/>
    <property type="project" value="GO_Central"/>
</dbReference>
<dbReference type="GO" id="GO:0051500">
    <property type="term" value="F:D-tyrosyl-tRNA(Tyr) deacylase activity"/>
    <property type="evidence" value="ECO:0000318"/>
    <property type="project" value="GO_Central"/>
</dbReference>
<dbReference type="GO" id="GO:0106026">
    <property type="term" value="F:Gly-tRNA(Ala) deacylase activity"/>
    <property type="evidence" value="ECO:0007669"/>
    <property type="project" value="UniProtKB-UniRule"/>
</dbReference>
<dbReference type="GO" id="GO:0043908">
    <property type="term" value="F:Ser(Gly)-tRNA(Ala) hydrolase activity"/>
    <property type="evidence" value="ECO:0007669"/>
    <property type="project" value="UniProtKB-UniRule"/>
</dbReference>
<dbReference type="GO" id="GO:0000049">
    <property type="term" value="F:tRNA binding"/>
    <property type="evidence" value="ECO:0007669"/>
    <property type="project" value="UniProtKB-UniRule"/>
</dbReference>
<dbReference type="GO" id="GO:0019478">
    <property type="term" value="P:D-amino acid catabolic process"/>
    <property type="evidence" value="ECO:0007669"/>
    <property type="project" value="UniProtKB-UniRule"/>
</dbReference>
<dbReference type="GO" id="GO:0006399">
    <property type="term" value="P:tRNA metabolic process"/>
    <property type="evidence" value="ECO:0000318"/>
    <property type="project" value="GO_Central"/>
</dbReference>
<dbReference type="CDD" id="cd00563">
    <property type="entry name" value="Dtyr_deacylase"/>
    <property type="match status" value="1"/>
</dbReference>
<dbReference type="FunFam" id="3.50.80.10:FF:000002">
    <property type="entry name" value="D-aminoacyl-tRNA deacylase"/>
    <property type="match status" value="1"/>
</dbReference>
<dbReference type="Gene3D" id="3.50.80.10">
    <property type="entry name" value="D-tyrosyl-tRNA(Tyr) deacylase"/>
    <property type="match status" value="1"/>
</dbReference>
<dbReference type="HAMAP" id="MF_00518">
    <property type="entry name" value="Deacylase_Dtd"/>
    <property type="match status" value="1"/>
</dbReference>
<dbReference type="InterPro" id="IPR003732">
    <property type="entry name" value="Daa-tRNA_deacyls_DTD"/>
</dbReference>
<dbReference type="InterPro" id="IPR023509">
    <property type="entry name" value="DTD-like_sf"/>
</dbReference>
<dbReference type="NCBIfam" id="TIGR00256">
    <property type="entry name" value="D-aminoacyl-tRNA deacylase"/>
    <property type="match status" value="1"/>
</dbReference>
<dbReference type="PANTHER" id="PTHR10472:SF5">
    <property type="entry name" value="D-AMINOACYL-TRNA DEACYLASE 1"/>
    <property type="match status" value="1"/>
</dbReference>
<dbReference type="PANTHER" id="PTHR10472">
    <property type="entry name" value="D-TYROSYL-TRNA TYR DEACYLASE"/>
    <property type="match status" value="1"/>
</dbReference>
<dbReference type="Pfam" id="PF02580">
    <property type="entry name" value="Tyr_Deacylase"/>
    <property type="match status" value="1"/>
</dbReference>
<dbReference type="SUPFAM" id="SSF69500">
    <property type="entry name" value="DTD-like"/>
    <property type="match status" value="1"/>
</dbReference>